<evidence type="ECO:0000250" key="1">
    <source>
        <dbReference type="UniProtKB" id="P03915"/>
    </source>
</evidence>
<evidence type="ECO:0000250" key="2">
    <source>
        <dbReference type="UniProtKB" id="P03920"/>
    </source>
</evidence>
<evidence type="ECO:0000255" key="3"/>
<evidence type="ECO:0000305" key="4"/>
<geneLocation type="mitochondrion"/>
<keyword id="KW-0249">Electron transport</keyword>
<keyword id="KW-0472">Membrane</keyword>
<keyword id="KW-0496">Mitochondrion</keyword>
<keyword id="KW-0999">Mitochondrion inner membrane</keyword>
<keyword id="KW-0520">NAD</keyword>
<keyword id="KW-0679">Respiratory chain</keyword>
<keyword id="KW-1278">Translocase</keyword>
<keyword id="KW-0812">Transmembrane</keyword>
<keyword id="KW-1133">Transmembrane helix</keyword>
<keyword id="KW-0813">Transport</keyword>
<keyword id="KW-0830">Ubiquinone</keyword>
<comment type="function">
    <text evidence="1">Core subunit of the mitochondrial membrane respiratory chain NADH dehydrogenase (Complex I) which catalyzes electron transfer from NADH through the respiratory chain, using ubiquinone as an electron acceptor. Essential for the catalytic activity and assembly of complex I.</text>
</comment>
<comment type="catalytic activity">
    <reaction evidence="1">
        <text>a ubiquinone + NADH + 5 H(+)(in) = a ubiquinol + NAD(+) + 4 H(+)(out)</text>
        <dbReference type="Rhea" id="RHEA:29091"/>
        <dbReference type="Rhea" id="RHEA-COMP:9565"/>
        <dbReference type="Rhea" id="RHEA-COMP:9566"/>
        <dbReference type="ChEBI" id="CHEBI:15378"/>
        <dbReference type="ChEBI" id="CHEBI:16389"/>
        <dbReference type="ChEBI" id="CHEBI:17976"/>
        <dbReference type="ChEBI" id="CHEBI:57540"/>
        <dbReference type="ChEBI" id="CHEBI:57945"/>
        <dbReference type="EC" id="7.1.1.2"/>
    </reaction>
</comment>
<comment type="subunit">
    <text evidence="2">Core subunit of respiratory chain NADH dehydrogenase (Complex I) which is composed of 45 different subunits.</text>
</comment>
<comment type="subcellular location">
    <subcellularLocation>
        <location evidence="2">Mitochondrion inner membrane</location>
        <topology evidence="3">Multi-pass membrane protein</topology>
    </subcellularLocation>
</comment>
<comment type="similarity">
    <text evidence="4">Belongs to the complex I subunit 5 family.</text>
</comment>
<feature type="chain" id="PRO_0000118102" description="NADH-ubiquinone oxidoreductase chain 5">
    <location>
        <begin position="1"/>
        <end position="603"/>
    </location>
</feature>
<feature type="transmembrane region" description="Helical" evidence="3">
    <location>
        <begin position="4"/>
        <end position="24"/>
    </location>
</feature>
<feature type="transmembrane region" description="Helical" evidence="3">
    <location>
        <begin position="36"/>
        <end position="56"/>
    </location>
</feature>
<feature type="transmembrane region" description="Helical" evidence="3">
    <location>
        <begin position="87"/>
        <end position="107"/>
    </location>
</feature>
<feature type="transmembrane region" description="Helical" evidence="3">
    <location>
        <begin position="114"/>
        <end position="134"/>
    </location>
</feature>
<feature type="transmembrane region" description="Helical" evidence="3">
    <location>
        <begin position="137"/>
        <end position="157"/>
    </location>
</feature>
<feature type="transmembrane region" description="Helical" evidence="3">
    <location>
        <begin position="171"/>
        <end position="191"/>
    </location>
</feature>
<feature type="transmembrane region" description="Helical" evidence="3">
    <location>
        <begin position="200"/>
        <end position="220"/>
    </location>
</feature>
<feature type="transmembrane region" description="Helical" evidence="3">
    <location>
        <begin position="241"/>
        <end position="261"/>
    </location>
</feature>
<feature type="transmembrane region" description="Helical" evidence="3">
    <location>
        <begin position="272"/>
        <end position="292"/>
    </location>
</feature>
<feature type="transmembrane region" description="Helical" evidence="3">
    <location>
        <begin position="301"/>
        <end position="320"/>
    </location>
</feature>
<feature type="transmembrane region" description="Helical" evidence="3">
    <location>
        <begin position="325"/>
        <end position="347"/>
    </location>
</feature>
<feature type="transmembrane region" description="Helical" evidence="3">
    <location>
        <begin position="366"/>
        <end position="386"/>
    </location>
</feature>
<feature type="transmembrane region" description="Helical" evidence="3">
    <location>
        <begin position="407"/>
        <end position="429"/>
    </location>
</feature>
<feature type="transmembrane region" description="Helical" evidence="3">
    <location>
        <begin position="457"/>
        <end position="477"/>
    </location>
</feature>
<feature type="transmembrane region" description="Helical" evidence="3">
    <location>
        <begin position="482"/>
        <end position="502"/>
    </location>
</feature>
<feature type="transmembrane region" description="Helical" evidence="3">
    <location>
        <begin position="583"/>
        <end position="603"/>
    </location>
</feature>
<accession>P03919</accession>
<gene>
    <name type="primary">MT-ND5</name>
    <name type="synonym">MTND5</name>
    <name type="synonym">NADH5</name>
    <name type="synonym">ND5</name>
</gene>
<sequence length="603" mass="67361">MAMYTTMAILTLTSLIPPITATLINPNKKNLYPHYVKMTIASTFMISLFPTMMFMCTDQETIISNWHWTATQTLELSLSFKLDYFSMMFIPIALFVTWSIMEFSLWYMHSDPNINQFFKYLLIFLTTMLILVTANNLFQLFIGWEGVGIMSFLLIGWWHAREEANTAAIQAILYNRIGDIGFILALAWFLLHTNSWEPQQMILLNSNPNFLPLAGLLLAARGKSAQLGLHPWLPSAMEGPTPVSALLHSSTMVVAGVFLLIRFHPLTENNQLIQTLTLCLGAITTLFTAICALTQNDIKKIVAFSTSSQLGLMVVTIGINQPYLAFLHICTHAFFKAMLFMCSGSIIHNLNNEQDIRKMGGLFKTLPLTSTSLTIGSLALTGMPFLTGFYSKDLIIETANMSYTNAWALSTTLIATSLTSAYSTRMILLTLTNRPRFPTLTNINENNPTLLNPIKRLTIGSLLAGFLIINSIPPTSPSQTTIPLYLKLTALSITLLGFLTAFDLHLLTNKLKMKNPSHTFHFSNMLGFYPNTIHRTIPYASLTMSQNLASLLLDLAWLEKLMPKTISHHQISASVTISSQKGMIKLYSLSLLIPLSLTLLLIM</sequence>
<protein>
    <recommendedName>
        <fullName>NADH-ubiquinone oxidoreductase chain 5</fullName>
        <ecNumber evidence="1">7.1.1.2</ecNumber>
    </recommendedName>
    <alternativeName>
        <fullName>NADH dehydrogenase subunit 5</fullName>
    </alternativeName>
</protein>
<organism>
    <name type="scientific">Hylobates lar</name>
    <name type="common">Lar gibbon</name>
    <name type="synonym">White-handed gibbon</name>
    <dbReference type="NCBI Taxonomy" id="9580"/>
    <lineage>
        <taxon>Eukaryota</taxon>
        <taxon>Metazoa</taxon>
        <taxon>Chordata</taxon>
        <taxon>Craniata</taxon>
        <taxon>Vertebrata</taxon>
        <taxon>Euteleostomi</taxon>
        <taxon>Mammalia</taxon>
        <taxon>Eutheria</taxon>
        <taxon>Euarchontoglires</taxon>
        <taxon>Primates</taxon>
        <taxon>Haplorrhini</taxon>
        <taxon>Catarrhini</taxon>
        <taxon>Hylobatidae</taxon>
        <taxon>Hylobates</taxon>
    </lineage>
</organism>
<proteinExistence type="inferred from homology"/>
<reference key="1">
    <citation type="journal article" date="1996" name="Hereditas">
        <title>A complete mitochondrial DNA molecule of the white-handed gibbon, Hylobates lar, and comparison among individual mitochondrial genes of all hominoid genera.</title>
        <authorList>
            <person name="Arnason U."/>
            <person name="Gullberg A."/>
            <person name="Xu X."/>
        </authorList>
    </citation>
    <scope>NUCLEOTIDE SEQUENCE [GENOMIC DNA]</scope>
    <source>
        <strain>Isolate Ester</strain>
    </source>
</reference>
<reference key="2">
    <citation type="journal article" date="1982" name="J. Mol. Evol.">
        <title>Mitochondrial DNA sequences of primates: tempo and mode of evolution.</title>
        <authorList>
            <person name="Brown W.M."/>
            <person name="Prager E.M."/>
            <person name="Wang A."/>
            <person name="Wilson A.C."/>
        </authorList>
    </citation>
    <scope>NUCLEOTIDE SEQUENCE [GENOMIC DNA] OF 1-79</scope>
</reference>
<name>NU5M_HYLLA</name>
<dbReference type="EC" id="7.1.1.2" evidence="1"/>
<dbReference type="EMBL" id="X99256">
    <property type="protein sequence ID" value="CAA67638.1"/>
    <property type="molecule type" value="Genomic_DNA"/>
</dbReference>
<dbReference type="EMBL" id="V00659">
    <property type="protein sequence ID" value="CAA24025.1"/>
    <property type="molecule type" value="Genomic_DNA"/>
</dbReference>
<dbReference type="PIR" id="T11843">
    <property type="entry name" value="T11843"/>
</dbReference>
<dbReference type="RefSeq" id="NP_007832.1">
    <property type="nucleotide sequence ID" value="NC_002082.1"/>
</dbReference>
<dbReference type="SMR" id="P03919"/>
<dbReference type="GeneID" id="808465"/>
<dbReference type="CTD" id="4540"/>
<dbReference type="GO" id="GO:0005743">
    <property type="term" value="C:mitochondrial inner membrane"/>
    <property type="evidence" value="ECO:0000250"/>
    <property type="project" value="UniProtKB"/>
</dbReference>
<dbReference type="GO" id="GO:0008137">
    <property type="term" value="F:NADH dehydrogenase (ubiquinone) activity"/>
    <property type="evidence" value="ECO:0000250"/>
    <property type="project" value="UniProtKB"/>
</dbReference>
<dbReference type="GO" id="GO:0015990">
    <property type="term" value="P:electron transport coupled proton transport"/>
    <property type="evidence" value="ECO:0007669"/>
    <property type="project" value="TreeGrafter"/>
</dbReference>
<dbReference type="GO" id="GO:0006120">
    <property type="term" value="P:mitochondrial electron transport, NADH to ubiquinone"/>
    <property type="evidence" value="ECO:0000250"/>
    <property type="project" value="UniProtKB"/>
</dbReference>
<dbReference type="GO" id="GO:0032981">
    <property type="term" value="P:mitochondrial respiratory chain complex I assembly"/>
    <property type="evidence" value="ECO:0000250"/>
    <property type="project" value="UniProtKB"/>
</dbReference>
<dbReference type="InterPro" id="IPR010934">
    <property type="entry name" value="NADH_DH_su5_C"/>
</dbReference>
<dbReference type="InterPro" id="IPR018393">
    <property type="entry name" value="NADHpl_OxRdtase_5_subgr"/>
</dbReference>
<dbReference type="InterPro" id="IPR001750">
    <property type="entry name" value="ND/Mrp_TM"/>
</dbReference>
<dbReference type="InterPro" id="IPR003945">
    <property type="entry name" value="NU5C-like"/>
</dbReference>
<dbReference type="InterPro" id="IPR001516">
    <property type="entry name" value="Proton_antipo_N"/>
</dbReference>
<dbReference type="NCBIfam" id="TIGR01974">
    <property type="entry name" value="NDH_I_L"/>
    <property type="match status" value="1"/>
</dbReference>
<dbReference type="PANTHER" id="PTHR42829">
    <property type="entry name" value="NADH-UBIQUINONE OXIDOREDUCTASE CHAIN 5"/>
    <property type="match status" value="1"/>
</dbReference>
<dbReference type="PANTHER" id="PTHR42829:SF2">
    <property type="entry name" value="NADH-UBIQUINONE OXIDOREDUCTASE CHAIN 5"/>
    <property type="match status" value="1"/>
</dbReference>
<dbReference type="Pfam" id="PF06455">
    <property type="entry name" value="NADH5_C"/>
    <property type="match status" value="1"/>
</dbReference>
<dbReference type="Pfam" id="PF00361">
    <property type="entry name" value="Proton_antipo_M"/>
    <property type="match status" value="1"/>
</dbReference>
<dbReference type="Pfam" id="PF00662">
    <property type="entry name" value="Proton_antipo_N"/>
    <property type="match status" value="1"/>
</dbReference>
<dbReference type="PRINTS" id="PR01434">
    <property type="entry name" value="NADHDHGNASE5"/>
</dbReference>